<reference key="1">
    <citation type="submission" date="2006-10" db="EMBL/GenBank/DDBJ databases">
        <authorList>
            <person name="Fleischmann R.D."/>
            <person name="Dodson R.J."/>
            <person name="Haft D.H."/>
            <person name="Merkel J.S."/>
            <person name="Nelson W.C."/>
            <person name="Fraser C.M."/>
        </authorList>
    </citation>
    <scope>NUCLEOTIDE SEQUENCE [LARGE SCALE GENOMIC DNA]</scope>
    <source>
        <strain>ATCC 700084 / mc(2)155</strain>
    </source>
</reference>
<reference key="2">
    <citation type="journal article" date="2007" name="Genome Biol.">
        <title>Interrupted coding sequences in Mycobacterium smegmatis: authentic mutations or sequencing errors?</title>
        <authorList>
            <person name="Deshayes C."/>
            <person name="Perrodou E."/>
            <person name="Gallien S."/>
            <person name="Euphrasie D."/>
            <person name="Schaeffer C."/>
            <person name="Van-Dorsselaer A."/>
            <person name="Poch O."/>
            <person name="Lecompte O."/>
            <person name="Reyrat J.-M."/>
        </authorList>
    </citation>
    <scope>NUCLEOTIDE SEQUENCE [LARGE SCALE GENOMIC DNA]</scope>
    <source>
        <strain>ATCC 700084 / mc(2)155</strain>
    </source>
</reference>
<reference key="3">
    <citation type="journal article" date="2009" name="Genome Res.">
        <title>Ortho-proteogenomics: multiple proteomes investigation through orthology and a new MS-based protocol.</title>
        <authorList>
            <person name="Gallien S."/>
            <person name="Perrodou E."/>
            <person name="Carapito C."/>
            <person name="Deshayes C."/>
            <person name="Reyrat J.-M."/>
            <person name="Van Dorsselaer A."/>
            <person name="Poch O."/>
            <person name="Schaeffer C."/>
            <person name="Lecompte O."/>
        </authorList>
    </citation>
    <scope>NUCLEOTIDE SEQUENCE [LARGE SCALE GENOMIC DNA]</scope>
    <scope>IDENTIFICATION BY MASS SPECTROMETRY [LARGE SCALE ANALYSIS]</scope>
    <source>
        <strain>ATCC 700084 / mc(2)155</strain>
    </source>
</reference>
<dbReference type="EC" id="4.3.2.1" evidence="1"/>
<dbReference type="EMBL" id="CP000480">
    <property type="protein sequence ID" value="ABK73307.1"/>
    <property type="molecule type" value="Genomic_DNA"/>
</dbReference>
<dbReference type="EMBL" id="CP001663">
    <property type="protein sequence ID" value="AFP40139.1"/>
    <property type="molecule type" value="Genomic_DNA"/>
</dbReference>
<dbReference type="RefSeq" id="WP_011729312.1">
    <property type="nucleotide sequence ID" value="NZ_SIJM01000005.1"/>
</dbReference>
<dbReference type="RefSeq" id="YP_888063.1">
    <property type="nucleotide sequence ID" value="NC_008596.1"/>
</dbReference>
<dbReference type="SMR" id="A0QYS5"/>
<dbReference type="STRING" id="246196.MSMEG_3769"/>
<dbReference type="PaxDb" id="246196-MSMEI_3680"/>
<dbReference type="GeneID" id="93458511"/>
<dbReference type="KEGG" id="msb:LJ00_18725"/>
<dbReference type="KEGG" id="msg:MSMEI_3680"/>
<dbReference type="KEGG" id="msm:MSMEG_3769"/>
<dbReference type="PATRIC" id="fig|246196.19.peg.3708"/>
<dbReference type="eggNOG" id="COG0165">
    <property type="taxonomic scope" value="Bacteria"/>
</dbReference>
<dbReference type="OrthoDB" id="9769623at2"/>
<dbReference type="UniPathway" id="UPA00068">
    <property type="reaction ID" value="UER00114"/>
</dbReference>
<dbReference type="Proteomes" id="UP000000757">
    <property type="component" value="Chromosome"/>
</dbReference>
<dbReference type="Proteomes" id="UP000006158">
    <property type="component" value="Chromosome"/>
</dbReference>
<dbReference type="GO" id="GO:0005829">
    <property type="term" value="C:cytosol"/>
    <property type="evidence" value="ECO:0007669"/>
    <property type="project" value="TreeGrafter"/>
</dbReference>
<dbReference type="GO" id="GO:0004056">
    <property type="term" value="F:argininosuccinate lyase activity"/>
    <property type="evidence" value="ECO:0007669"/>
    <property type="project" value="UniProtKB-UniRule"/>
</dbReference>
<dbReference type="GO" id="GO:0042450">
    <property type="term" value="P:arginine biosynthetic process via ornithine"/>
    <property type="evidence" value="ECO:0007669"/>
    <property type="project" value="InterPro"/>
</dbReference>
<dbReference type="GO" id="GO:0006526">
    <property type="term" value="P:L-arginine biosynthetic process"/>
    <property type="evidence" value="ECO:0007669"/>
    <property type="project" value="UniProtKB-UniRule"/>
</dbReference>
<dbReference type="CDD" id="cd01359">
    <property type="entry name" value="Argininosuccinate_lyase"/>
    <property type="match status" value="1"/>
</dbReference>
<dbReference type="FunFam" id="1.10.40.30:FF:000001">
    <property type="entry name" value="Argininosuccinate lyase"/>
    <property type="match status" value="1"/>
</dbReference>
<dbReference type="FunFam" id="1.20.200.10:FF:000015">
    <property type="entry name" value="argininosuccinate lyase isoform X2"/>
    <property type="match status" value="1"/>
</dbReference>
<dbReference type="Gene3D" id="1.10.40.30">
    <property type="entry name" value="Fumarase/aspartase (C-terminal domain)"/>
    <property type="match status" value="1"/>
</dbReference>
<dbReference type="Gene3D" id="1.20.200.10">
    <property type="entry name" value="Fumarase/aspartase (Central domain)"/>
    <property type="match status" value="1"/>
</dbReference>
<dbReference type="Gene3D" id="1.10.275.10">
    <property type="entry name" value="Fumarase/aspartase (N-terminal domain)"/>
    <property type="match status" value="1"/>
</dbReference>
<dbReference type="HAMAP" id="MF_00006">
    <property type="entry name" value="Arg_succ_lyase"/>
    <property type="match status" value="1"/>
</dbReference>
<dbReference type="InterPro" id="IPR029419">
    <property type="entry name" value="Arg_succ_lyase_C"/>
</dbReference>
<dbReference type="InterPro" id="IPR009049">
    <property type="entry name" value="Argininosuccinate_lyase"/>
</dbReference>
<dbReference type="InterPro" id="IPR024083">
    <property type="entry name" value="Fumarase/histidase_N"/>
</dbReference>
<dbReference type="InterPro" id="IPR020557">
    <property type="entry name" value="Fumarate_lyase_CS"/>
</dbReference>
<dbReference type="InterPro" id="IPR000362">
    <property type="entry name" value="Fumarate_lyase_fam"/>
</dbReference>
<dbReference type="InterPro" id="IPR022761">
    <property type="entry name" value="Fumarate_lyase_N"/>
</dbReference>
<dbReference type="InterPro" id="IPR008948">
    <property type="entry name" value="L-Aspartase-like"/>
</dbReference>
<dbReference type="NCBIfam" id="TIGR00838">
    <property type="entry name" value="argH"/>
    <property type="match status" value="1"/>
</dbReference>
<dbReference type="PANTHER" id="PTHR43814">
    <property type="entry name" value="ARGININOSUCCINATE LYASE"/>
    <property type="match status" value="1"/>
</dbReference>
<dbReference type="PANTHER" id="PTHR43814:SF1">
    <property type="entry name" value="ARGININOSUCCINATE LYASE"/>
    <property type="match status" value="1"/>
</dbReference>
<dbReference type="Pfam" id="PF14698">
    <property type="entry name" value="ASL_C2"/>
    <property type="match status" value="1"/>
</dbReference>
<dbReference type="Pfam" id="PF00206">
    <property type="entry name" value="Lyase_1"/>
    <property type="match status" value="1"/>
</dbReference>
<dbReference type="PRINTS" id="PR00145">
    <property type="entry name" value="ARGSUCLYASE"/>
</dbReference>
<dbReference type="PRINTS" id="PR00149">
    <property type="entry name" value="FUMRATELYASE"/>
</dbReference>
<dbReference type="SUPFAM" id="SSF48557">
    <property type="entry name" value="L-aspartase-like"/>
    <property type="match status" value="1"/>
</dbReference>
<dbReference type="PROSITE" id="PS00163">
    <property type="entry name" value="FUMARATE_LYASES"/>
    <property type="match status" value="1"/>
</dbReference>
<accession>A0QYS5</accession>
<accession>I7GC35</accession>
<organism>
    <name type="scientific">Mycolicibacterium smegmatis (strain ATCC 700084 / mc(2)155)</name>
    <name type="common">Mycobacterium smegmatis</name>
    <dbReference type="NCBI Taxonomy" id="246196"/>
    <lineage>
        <taxon>Bacteria</taxon>
        <taxon>Bacillati</taxon>
        <taxon>Actinomycetota</taxon>
        <taxon>Actinomycetes</taxon>
        <taxon>Mycobacteriales</taxon>
        <taxon>Mycobacteriaceae</taxon>
        <taxon>Mycolicibacterium</taxon>
    </lineage>
</organism>
<name>ARLY_MYCS2</name>
<keyword id="KW-0028">Amino-acid biosynthesis</keyword>
<keyword id="KW-0055">Arginine biosynthesis</keyword>
<keyword id="KW-0963">Cytoplasm</keyword>
<keyword id="KW-0456">Lyase</keyword>
<keyword id="KW-1185">Reference proteome</keyword>
<protein>
    <recommendedName>
        <fullName evidence="1">Argininosuccinate lyase</fullName>
        <shortName evidence="1">ASAL</shortName>
        <ecNumber evidence="1">4.3.2.1</ecNumber>
    </recommendedName>
    <alternativeName>
        <fullName evidence="1">Arginosuccinase</fullName>
    </alternativeName>
</protein>
<comment type="catalytic activity">
    <reaction evidence="1">
        <text>2-(N(omega)-L-arginino)succinate = fumarate + L-arginine</text>
        <dbReference type="Rhea" id="RHEA:24020"/>
        <dbReference type="ChEBI" id="CHEBI:29806"/>
        <dbReference type="ChEBI" id="CHEBI:32682"/>
        <dbReference type="ChEBI" id="CHEBI:57472"/>
        <dbReference type="EC" id="4.3.2.1"/>
    </reaction>
</comment>
<comment type="pathway">
    <text evidence="1">Amino-acid biosynthesis; L-arginine biosynthesis; L-arginine from L-ornithine and carbamoyl phosphate: step 3/3.</text>
</comment>
<comment type="subcellular location">
    <subcellularLocation>
        <location evidence="1">Cytoplasm</location>
    </subcellularLocation>
</comment>
<comment type="similarity">
    <text evidence="1">Belongs to the lyase 1 family. Argininosuccinate lyase subfamily.</text>
</comment>
<feature type="chain" id="PRO_1000000506" description="Argininosuccinate lyase">
    <location>
        <begin position="1"/>
        <end position="469"/>
    </location>
</feature>
<sequence length="469" mass="49744">MSTNEGSLWGGRFADGPSDALAALSKSTHFDWALAPYDIKASKAHARVLHRAGLLTDEQRDGLLAGLDSLGSDVADGSFEPLPTDEDVHGALERGLIDRVGPDLGGRLRAGRSRNDQVATLFRMWLRDAVRRVADGCLEVVNALAVQAAAHPTAIMPGKTHLQAAQPILLAHHLLAHAHPLLRDVDRLADFDDRTAVSPYGSGALAGSSLGLDPDAIAEDLGFASAADNSVDATASRDFAAEAAFVFAQIGVDLSRLAEDIILWSSTEFGYVTLHDAWSTGSSIMPQKKNPDIAELARGKSGRLIGNLTGLLATLKAQPLAYNRDLQEDKEPVFDSVAQLELLLPAMAGLVGTLTFDEERMAELAPAGYTLATDIAEWLVRQGVPFRIAHEAAGAAVKVAEGRGVGLDALTDDEFASINPALTPDVREVLTVEGSVNARNARGGTAPTQVAKQLGVVRKAMEELRIRLS</sequence>
<gene>
    <name evidence="1" type="primary">argH</name>
    <name type="ordered locus">MSMEG_3769</name>
    <name type="ordered locus">MSMEI_3680</name>
</gene>
<proteinExistence type="evidence at protein level"/>
<evidence type="ECO:0000255" key="1">
    <source>
        <dbReference type="HAMAP-Rule" id="MF_00006"/>
    </source>
</evidence>